<keyword id="KW-0997">Cell inner membrane</keyword>
<keyword id="KW-1003">Cell membrane</keyword>
<keyword id="KW-0407">Ion channel</keyword>
<keyword id="KW-0406">Ion transport</keyword>
<keyword id="KW-0472">Membrane</keyword>
<keyword id="KW-0812">Transmembrane</keyword>
<keyword id="KW-1133">Transmembrane helix</keyword>
<keyword id="KW-0813">Transport</keyword>
<sequence length="140" mass="15062">MGMVSEFQQFAIRGNVIDLAVGVVIGAAFGKIVTALVEKIIMPPIGWAIGNVDFSRLAWVLKPAGVDATGKDIPAVAIGYGDFINTVVQFVIIAFAIFLLVKLINRVTNRKPDAPKGPSEEVLLLREIRDSLKNDTLKSG</sequence>
<evidence type="ECO:0000255" key="1">
    <source>
        <dbReference type="HAMAP-Rule" id="MF_00115"/>
    </source>
</evidence>
<gene>
    <name evidence="1" type="primary">mscL</name>
    <name type="ordered locus">XOO3185</name>
</gene>
<dbReference type="EMBL" id="AP008229">
    <property type="protein sequence ID" value="BAE69940.1"/>
    <property type="molecule type" value="Genomic_DNA"/>
</dbReference>
<dbReference type="RefSeq" id="WP_011409130.1">
    <property type="nucleotide sequence ID" value="NC_007705.1"/>
</dbReference>
<dbReference type="SMR" id="Q2P0I7"/>
<dbReference type="KEGG" id="xom:XOO3185"/>
<dbReference type="HOGENOM" id="CLU_095787_0_0_6"/>
<dbReference type="GO" id="GO:0005886">
    <property type="term" value="C:plasma membrane"/>
    <property type="evidence" value="ECO:0007669"/>
    <property type="project" value="UniProtKB-SubCell"/>
</dbReference>
<dbReference type="GO" id="GO:0008381">
    <property type="term" value="F:mechanosensitive monoatomic ion channel activity"/>
    <property type="evidence" value="ECO:0007669"/>
    <property type="project" value="UniProtKB-UniRule"/>
</dbReference>
<dbReference type="FunFam" id="1.10.1200.120:FF:000001">
    <property type="entry name" value="Large-conductance mechanosensitive channel"/>
    <property type="match status" value="1"/>
</dbReference>
<dbReference type="Gene3D" id="1.10.1200.120">
    <property type="entry name" value="Large-conductance mechanosensitive channel, MscL, domain 1"/>
    <property type="match status" value="1"/>
</dbReference>
<dbReference type="HAMAP" id="MF_00115">
    <property type="entry name" value="MscL"/>
    <property type="match status" value="1"/>
</dbReference>
<dbReference type="InterPro" id="IPR019823">
    <property type="entry name" value="Mechanosensitive_channel_CS"/>
</dbReference>
<dbReference type="InterPro" id="IPR001185">
    <property type="entry name" value="MS_channel"/>
</dbReference>
<dbReference type="InterPro" id="IPR037673">
    <property type="entry name" value="MSC/AndL"/>
</dbReference>
<dbReference type="InterPro" id="IPR036019">
    <property type="entry name" value="MscL_channel"/>
</dbReference>
<dbReference type="NCBIfam" id="TIGR00220">
    <property type="entry name" value="mscL"/>
    <property type="match status" value="1"/>
</dbReference>
<dbReference type="NCBIfam" id="NF001843">
    <property type="entry name" value="PRK00567.1-4"/>
    <property type="match status" value="1"/>
</dbReference>
<dbReference type="PANTHER" id="PTHR30266:SF2">
    <property type="entry name" value="LARGE-CONDUCTANCE MECHANOSENSITIVE CHANNEL"/>
    <property type="match status" value="1"/>
</dbReference>
<dbReference type="PANTHER" id="PTHR30266">
    <property type="entry name" value="MECHANOSENSITIVE CHANNEL MSCL"/>
    <property type="match status" value="1"/>
</dbReference>
<dbReference type="Pfam" id="PF01741">
    <property type="entry name" value="MscL"/>
    <property type="match status" value="1"/>
</dbReference>
<dbReference type="PRINTS" id="PR01264">
    <property type="entry name" value="MECHCHANNEL"/>
</dbReference>
<dbReference type="SUPFAM" id="SSF81330">
    <property type="entry name" value="Gated mechanosensitive channel"/>
    <property type="match status" value="1"/>
</dbReference>
<dbReference type="PROSITE" id="PS01327">
    <property type="entry name" value="MSCL"/>
    <property type="match status" value="1"/>
</dbReference>
<accession>Q2P0I7</accession>
<organism>
    <name type="scientific">Xanthomonas oryzae pv. oryzae (strain MAFF 311018)</name>
    <dbReference type="NCBI Taxonomy" id="342109"/>
    <lineage>
        <taxon>Bacteria</taxon>
        <taxon>Pseudomonadati</taxon>
        <taxon>Pseudomonadota</taxon>
        <taxon>Gammaproteobacteria</taxon>
        <taxon>Lysobacterales</taxon>
        <taxon>Lysobacteraceae</taxon>
        <taxon>Xanthomonas</taxon>
    </lineage>
</organism>
<name>MSCL_XANOM</name>
<proteinExistence type="inferred from homology"/>
<reference key="1">
    <citation type="journal article" date="2005" name="Jpn. Agric. Res. Q.">
        <title>Genome sequence of Xanthomonas oryzae pv. oryzae suggests contribution of large numbers of effector genes and insertion sequences to its race diversity.</title>
        <authorList>
            <person name="Ochiai H."/>
            <person name="Inoue Y."/>
            <person name="Takeya M."/>
            <person name="Sasaki A."/>
            <person name="Kaku H."/>
        </authorList>
    </citation>
    <scope>NUCLEOTIDE SEQUENCE [LARGE SCALE GENOMIC DNA]</scope>
    <source>
        <strain>MAFF 311018</strain>
    </source>
</reference>
<comment type="function">
    <text evidence="1">Channel that opens in response to stretch forces in the membrane lipid bilayer. May participate in the regulation of osmotic pressure changes within the cell.</text>
</comment>
<comment type="subunit">
    <text evidence="1">Homopentamer.</text>
</comment>
<comment type="subcellular location">
    <subcellularLocation>
        <location evidence="1">Cell inner membrane</location>
        <topology evidence="1">Multi-pass membrane protein</topology>
    </subcellularLocation>
</comment>
<comment type="similarity">
    <text evidence="1">Belongs to the MscL family.</text>
</comment>
<feature type="chain" id="PRO_0000238054" description="Large-conductance mechanosensitive channel">
    <location>
        <begin position="1"/>
        <end position="140"/>
    </location>
</feature>
<feature type="transmembrane region" description="Helical" evidence="1">
    <location>
        <begin position="16"/>
        <end position="36"/>
    </location>
</feature>
<feature type="transmembrane region" description="Helical" evidence="1">
    <location>
        <begin position="84"/>
        <end position="104"/>
    </location>
</feature>
<protein>
    <recommendedName>
        <fullName evidence="1">Large-conductance mechanosensitive channel</fullName>
    </recommendedName>
</protein>